<feature type="chain" id="PRO_1000203971" description="Protease HtpX homolog">
    <location>
        <begin position="1"/>
        <end position="303"/>
    </location>
</feature>
<feature type="transmembrane region" description="Helical" evidence="1">
    <location>
        <begin position="19"/>
        <end position="39"/>
    </location>
</feature>
<feature type="transmembrane region" description="Helical" evidence="1">
    <location>
        <begin position="41"/>
        <end position="61"/>
    </location>
</feature>
<feature type="transmembrane region" description="Helical" evidence="1">
    <location>
        <begin position="156"/>
        <end position="176"/>
    </location>
</feature>
<feature type="transmembrane region" description="Helical" evidence="1">
    <location>
        <begin position="192"/>
        <end position="212"/>
    </location>
</feature>
<feature type="active site" evidence="1">
    <location>
        <position position="147"/>
    </location>
</feature>
<feature type="binding site" evidence="1">
    <location>
        <position position="146"/>
    </location>
    <ligand>
        <name>Zn(2+)</name>
        <dbReference type="ChEBI" id="CHEBI:29105"/>
        <note>catalytic</note>
    </ligand>
</feature>
<feature type="binding site" evidence="1">
    <location>
        <position position="150"/>
    </location>
    <ligand>
        <name>Zn(2+)</name>
        <dbReference type="ChEBI" id="CHEBI:29105"/>
        <note>catalytic</note>
    </ligand>
</feature>
<feature type="binding site" evidence="1">
    <location>
        <position position="221"/>
    </location>
    <ligand>
        <name>Zn(2+)</name>
        <dbReference type="ChEBI" id="CHEBI:29105"/>
        <note>catalytic</note>
    </ligand>
</feature>
<accession>B5YDL5</accession>
<reference key="1">
    <citation type="journal article" date="2014" name="Genome Announc.">
        <title>Complete Genome Sequence of the Extreme Thermophile Dictyoglomus thermophilum H-6-12.</title>
        <authorList>
            <person name="Coil D.A."/>
            <person name="Badger J.H."/>
            <person name="Forberger H.C."/>
            <person name="Riggs F."/>
            <person name="Madupu R."/>
            <person name="Fedorova N."/>
            <person name="Ward N."/>
            <person name="Robb F.T."/>
            <person name="Eisen J.A."/>
        </authorList>
    </citation>
    <scope>NUCLEOTIDE SEQUENCE [LARGE SCALE GENOMIC DNA]</scope>
    <source>
        <strain>ATCC 35947 / DSM 3960 / H-6-12</strain>
    </source>
</reference>
<gene>
    <name evidence="1" type="primary">htpX</name>
    <name type="ordered locus">DICTH_0757</name>
</gene>
<keyword id="KW-0997">Cell inner membrane</keyword>
<keyword id="KW-1003">Cell membrane</keyword>
<keyword id="KW-0378">Hydrolase</keyword>
<keyword id="KW-0472">Membrane</keyword>
<keyword id="KW-0479">Metal-binding</keyword>
<keyword id="KW-0482">Metalloprotease</keyword>
<keyword id="KW-0645">Protease</keyword>
<keyword id="KW-0812">Transmembrane</keyword>
<keyword id="KW-1133">Transmembrane helix</keyword>
<keyword id="KW-0862">Zinc</keyword>
<protein>
    <recommendedName>
        <fullName evidence="1">Protease HtpX homolog</fullName>
        <ecNumber evidence="1">3.4.24.-</ecNumber>
    </recommendedName>
</protein>
<organism>
    <name type="scientific">Dictyoglomus thermophilum (strain ATCC 35947 / DSM 3960 / H-6-12)</name>
    <dbReference type="NCBI Taxonomy" id="309799"/>
    <lineage>
        <taxon>Bacteria</taxon>
        <taxon>Pseudomonadati</taxon>
        <taxon>Dictyoglomota</taxon>
        <taxon>Dictyoglomia</taxon>
        <taxon>Dictyoglomales</taxon>
        <taxon>Dictyoglomaceae</taxon>
        <taxon>Dictyoglomus</taxon>
    </lineage>
</organism>
<proteinExistence type="inferred from homology"/>
<evidence type="ECO:0000255" key="1">
    <source>
        <dbReference type="HAMAP-Rule" id="MF_00188"/>
    </source>
</evidence>
<name>HTPX_DICT6</name>
<sequence>MKPFTFYEAIEANKRKTWIIIFVISILLFLVCYAIVSYFELGEFGILVAFLMVFFVNYYAYKNSDEIILKYSGVREPTKEEFPYLLNVVEGLSIAAGIPTPKIYVMDDPSPNAFATGKDPKSGVVVVTKGLLDLLDRLELEGVIAHEISHIKNYDVRLQTVAAVMVGLIVILGDSLKRSFYYSRRRRDKDENILGIVSLVIAILAPFLATLLKFALSRQREYMADANAAMLTRYPEGLASALEKISKNFQPVKRANTMTAPLYIVNPLKGGMSNLFSTHPPIEDRIRRLRMMGERWKLLDKEG</sequence>
<comment type="cofactor">
    <cofactor evidence="1">
        <name>Zn(2+)</name>
        <dbReference type="ChEBI" id="CHEBI:29105"/>
    </cofactor>
    <text evidence="1">Binds 1 zinc ion per subunit.</text>
</comment>
<comment type="subcellular location">
    <subcellularLocation>
        <location evidence="1">Cell inner membrane</location>
        <topology evidence="1">Multi-pass membrane protein</topology>
    </subcellularLocation>
</comment>
<comment type="similarity">
    <text evidence="1">Belongs to the peptidase M48B family.</text>
</comment>
<dbReference type="EC" id="3.4.24.-" evidence="1"/>
<dbReference type="EMBL" id="CP001146">
    <property type="protein sequence ID" value="ACI19353.1"/>
    <property type="molecule type" value="Genomic_DNA"/>
</dbReference>
<dbReference type="RefSeq" id="WP_012547985.1">
    <property type="nucleotide sequence ID" value="NC_011297.1"/>
</dbReference>
<dbReference type="SMR" id="B5YDL5"/>
<dbReference type="STRING" id="309799.DICTH_0757"/>
<dbReference type="PaxDb" id="309799-DICTH_0757"/>
<dbReference type="KEGG" id="dth:DICTH_0757"/>
<dbReference type="eggNOG" id="COG0501">
    <property type="taxonomic scope" value="Bacteria"/>
</dbReference>
<dbReference type="HOGENOM" id="CLU_042266_3_0_0"/>
<dbReference type="OrthoDB" id="15218at2"/>
<dbReference type="Proteomes" id="UP000001733">
    <property type="component" value="Chromosome"/>
</dbReference>
<dbReference type="GO" id="GO:0005886">
    <property type="term" value="C:plasma membrane"/>
    <property type="evidence" value="ECO:0007669"/>
    <property type="project" value="UniProtKB-SubCell"/>
</dbReference>
<dbReference type="GO" id="GO:0004222">
    <property type="term" value="F:metalloendopeptidase activity"/>
    <property type="evidence" value="ECO:0007669"/>
    <property type="project" value="UniProtKB-UniRule"/>
</dbReference>
<dbReference type="GO" id="GO:0008270">
    <property type="term" value="F:zinc ion binding"/>
    <property type="evidence" value="ECO:0007669"/>
    <property type="project" value="UniProtKB-UniRule"/>
</dbReference>
<dbReference type="GO" id="GO:0006508">
    <property type="term" value="P:proteolysis"/>
    <property type="evidence" value="ECO:0007669"/>
    <property type="project" value="UniProtKB-KW"/>
</dbReference>
<dbReference type="CDD" id="cd07340">
    <property type="entry name" value="M48B_Htpx_like"/>
    <property type="match status" value="1"/>
</dbReference>
<dbReference type="Gene3D" id="3.30.2010.10">
    <property type="entry name" value="Metalloproteases ('zincins'), catalytic domain"/>
    <property type="match status" value="1"/>
</dbReference>
<dbReference type="HAMAP" id="MF_00188">
    <property type="entry name" value="Pept_M48_protease_HtpX"/>
    <property type="match status" value="1"/>
</dbReference>
<dbReference type="InterPro" id="IPR050083">
    <property type="entry name" value="HtpX_protease"/>
</dbReference>
<dbReference type="InterPro" id="IPR022919">
    <property type="entry name" value="Pept_M48_protease_HtpX"/>
</dbReference>
<dbReference type="InterPro" id="IPR001915">
    <property type="entry name" value="Peptidase_M48"/>
</dbReference>
<dbReference type="NCBIfam" id="NF003425">
    <property type="entry name" value="PRK04897.1"/>
    <property type="match status" value="1"/>
</dbReference>
<dbReference type="PANTHER" id="PTHR43221">
    <property type="entry name" value="PROTEASE HTPX"/>
    <property type="match status" value="1"/>
</dbReference>
<dbReference type="PANTHER" id="PTHR43221:SF1">
    <property type="entry name" value="PROTEASE HTPX"/>
    <property type="match status" value="1"/>
</dbReference>
<dbReference type="Pfam" id="PF01435">
    <property type="entry name" value="Peptidase_M48"/>
    <property type="match status" value="1"/>
</dbReference>